<gene>
    <name evidence="1" type="primary">rpe</name>
    <name type="ordered locus">MJ0680</name>
</gene>
<protein>
    <recommendedName>
        <fullName evidence="1">Ribulose-phosphate 3-epimerase</fullName>
        <ecNumber evidence="1">5.1.3.1</ecNumber>
    </recommendedName>
</protein>
<sequence>MIKIGASILSADFGHLREEIKKAEEAGVDFFHVDMMDGHFVPNISMGIGIAKHVKKLTELPVEVHLMVENVDLFVNEFEEMDYITFHIEAVKFPFRIINRIKSIGAKPIVALNPATPLDAIEYILGDVYAVLVMTVEPGFSGQKFIPVMTKKIRKLKSMIVENGYDTKIFVDGGINVETAPLAVKAGADVLVAASAIFGKDDVKTAVKNLREAALEALNKDFLTKSFNSNEEKQ</sequence>
<organism>
    <name type="scientific">Methanocaldococcus jannaschii (strain ATCC 43067 / DSM 2661 / JAL-1 / JCM 10045 / NBRC 100440)</name>
    <name type="common">Methanococcus jannaschii</name>
    <dbReference type="NCBI Taxonomy" id="243232"/>
    <lineage>
        <taxon>Archaea</taxon>
        <taxon>Methanobacteriati</taxon>
        <taxon>Methanobacteriota</taxon>
        <taxon>Methanomada group</taxon>
        <taxon>Methanococci</taxon>
        <taxon>Methanococcales</taxon>
        <taxon>Methanocaldococcaceae</taxon>
        <taxon>Methanocaldococcus</taxon>
    </lineage>
</organism>
<keyword id="KW-0119">Carbohydrate metabolism</keyword>
<keyword id="KW-0413">Isomerase</keyword>
<keyword id="KW-0479">Metal-binding</keyword>
<keyword id="KW-1185">Reference proteome</keyword>
<evidence type="ECO:0000255" key="1">
    <source>
        <dbReference type="HAMAP-Rule" id="MF_02227"/>
    </source>
</evidence>
<reference key="1">
    <citation type="journal article" date="1996" name="Science">
        <title>Complete genome sequence of the methanogenic archaeon, Methanococcus jannaschii.</title>
        <authorList>
            <person name="Bult C.J."/>
            <person name="White O."/>
            <person name="Olsen G.J."/>
            <person name="Zhou L."/>
            <person name="Fleischmann R.D."/>
            <person name="Sutton G.G."/>
            <person name="Blake J.A."/>
            <person name="FitzGerald L.M."/>
            <person name="Clayton R.A."/>
            <person name="Gocayne J.D."/>
            <person name="Kerlavage A.R."/>
            <person name="Dougherty B.A."/>
            <person name="Tomb J.-F."/>
            <person name="Adams M.D."/>
            <person name="Reich C.I."/>
            <person name="Overbeek R."/>
            <person name="Kirkness E.F."/>
            <person name="Weinstock K.G."/>
            <person name="Merrick J.M."/>
            <person name="Glodek A."/>
            <person name="Scott J.L."/>
            <person name="Geoghagen N.S.M."/>
            <person name="Weidman J.F."/>
            <person name="Fuhrmann J.L."/>
            <person name="Nguyen D."/>
            <person name="Utterback T.R."/>
            <person name="Kelley J.M."/>
            <person name="Peterson J.D."/>
            <person name="Sadow P.W."/>
            <person name="Hanna M.C."/>
            <person name="Cotton M.D."/>
            <person name="Roberts K.M."/>
            <person name="Hurst M.A."/>
            <person name="Kaine B.P."/>
            <person name="Borodovsky M."/>
            <person name="Klenk H.-P."/>
            <person name="Fraser C.M."/>
            <person name="Smith H.O."/>
            <person name="Woese C.R."/>
            <person name="Venter J.C."/>
        </authorList>
    </citation>
    <scope>NUCLEOTIDE SEQUENCE [LARGE SCALE GENOMIC DNA]</scope>
    <source>
        <strain>ATCC 43067 / DSM 2661 / JAL-1 / JCM 10045 / NBRC 100440</strain>
    </source>
</reference>
<name>RPE_METJA</name>
<accession>Q58093</accession>
<dbReference type="EC" id="5.1.3.1" evidence="1"/>
<dbReference type="EMBL" id="L77117">
    <property type="protein sequence ID" value="AAB98675.1"/>
    <property type="molecule type" value="Genomic_DNA"/>
</dbReference>
<dbReference type="PIR" id="H64384">
    <property type="entry name" value="H64384"/>
</dbReference>
<dbReference type="RefSeq" id="WP_010870185.1">
    <property type="nucleotide sequence ID" value="NC_000909.1"/>
</dbReference>
<dbReference type="SMR" id="Q58093"/>
<dbReference type="FunCoup" id="Q58093">
    <property type="interactions" value="283"/>
</dbReference>
<dbReference type="STRING" id="243232.MJ_0680"/>
<dbReference type="PaxDb" id="243232-MJ_0680"/>
<dbReference type="EnsemblBacteria" id="AAB98675">
    <property type="protein sequence ID" value="AAB98675"/>
    <property type="gene ID" value="MJ_0680"/>
</dbReference>
<dbReference type="GeneID" id="1451546"/>
<dbReference type="KEGG" id="mja:MJ_0680"/>
<dbReference type="eggNOG" id="arCOG05046">
    <property type="taxonomic scope" value="Archaea"/>
</dbReference>
<dbReference type="HOGENOM" id="CLU_054856_2_1_2"/>
<dbReference type="InParanoid" id="Q58093"/>
<dbReference type="OrthoDB" id="53073at2157"/>
<dbReference type="PhylomeDB" id="Q58093"/>
<dbReference type="Proteomes" id="UP000000805">
    <property type="component" value="Chromosome"/>
</dbReference>
<dbReference type="GO" id="GO:0005829">
    <property type="term" value="C:cytosol"/>
    <property type="evidence" value="ECO:0000318"/>
    <property type="project" value="GO_Central"/>
</dbReference>
<dbReference type="GO" id="GO:0004750">
    <property type="term" value="F:D-ribulose-phosphate 3-epimerase activity"/>
    <property type="evidence" value="ECO:0000318"/>
    <property type="project" value="GO_Central"/>
</dbReference>
<dbReference type="GO" id="GO:0046872">
    <property type="term" value="F:metal ion binding"/>
    <property type="evidence" value="ECO:0000318"/>
    <property type="project" value="GO_Central"/>
</dbReference>
<dbReference type="GO" id="GO:0005975">
    <property type="term" value="P:carbohydrate metabolic process"/>
    <property type="evidence" value="ECO:0000318"/>
    <property type="project" value="GO_Central"/>
</dbReference>
<dbReference type="GO" id="GO:0019323">
    <property type="term" value="P:pentose catabolic process"/>
    <property type="evidence" value="ECO:0007669"/>
    <property type="project" value="UniProtKB-UniRule"/>
</dbReference>
<dbReference type="GO" id="GO:0009052">
    <property type="term" value="P:pentose-phosphate shunt, non-oxidative branch"/>
    <property type="evidence" value="ECO:0000318"/>
    <property type="project" value="GO_Central"/>
</dbReference>
<dbReference type="CDD" id="cd00429">
    <property type="entry name" value="RPE"/>
    <property type="match status" value="1"/>
</dbReference>
<dbReference type="FunFam" id="3.20.20.70:FF:000004">
    <property type="entry name" value="Ribulose-phosphate 3-epimerase"/>
    <property type="match status" value="1"/>
</dbReference>
<dbReference type="Gene3D" id="3.20.20.70">
    <property type="entry name" value="Aldolase class I"/>
    <property type="match status" value="1"/>
</dbReference>
<dbReference type="HAMAP" id="MF_02227">
    <property type="entry name" value="RPE"/>
    <property type="match status" value="1"/>
</dbReference>
<dbReference type="InterPro" id="IPR013785">
    <property type="entry name" value="Aldolase_TIM"/>
</dbReference>
<dbReference type="InterPro" id="IPR026019">
    <property type="entry name" value="Ribul_P_3_epim"/>
</dbReference>
<dbReference type="InterPro" id="IPR000056">
    <property type="entry name" value="Ribul_P_3_epim-like"/>
</dbReference>
<dbReference type="InterPro" id="IPR011060">
    <property type="entry name" value="RibuloseP-bd_barrel"/>
</dbReference>
<dbReference type="NCBIfam" id="NF004076">
    <property type="entry name" value="PRK05581.1-4"/>
    <property type="match status" value="1"/>
</dbReference>
<dbReference type="NCBIfam" id="TIGR01163">
    <property type="entry name" value="rpe"/>
    <property type="match status" value="1"/>
</dbReference>
<dbReference type="PANTHER" id="PTHR11749">
    <property type="entry name" value="RIBULOSE-5-PHOSPHATE-3-EPIMERASE"/>
    <property type="match status" value="1"/>
</dbReference>
<dbReference type="Pfam" id="PF00834">
    <property type="entry name" value="Ribul_P_3_epim"/>
    <property type="match status" value="1"/>
</dbReference>
<dbReference type="PIRSF" id="PIRSF001461">
    <property type="entry name" value="RPE"/>
    <property type="match status" value="1"/>
</dbReference>
<dbReference type="SUPFAM" id="SSF51366">
    <property type="entry name" value="Ribulose-phoshate binding barrel"/>
    <property type="match status" value="1"/>
</dbReference>
<dbReference type="PROSITE" id="PS01085">
    <property type="entry name" value="RIBUL_P_3_EPIMER_1"/>
    <property type="match status" value="1"/>
</dbReference>
<dbReference type="PROSITE" id="PS01086">
    <property type="entry name" value="RIBUL_P_3_EPIMER_2"/>
    <property type="match status" value="1"/>
</dbReference>
<comment type="function">
    <text evidence="1">Catalyzes the reversible epimerization of D-ribulose 5-phosphate to D-xylulose 5-phosphate.</text>
</comment>
<comment type="catalytic activity">
    <reaction evidence="1">
        <text>D-ribulose 5-phosphate = D-xylulose 5-phosphate</text>
        <dbReference type="Rhea" id="RHEA:13677"/>
        <dbReference type="ChEBI" id="CHEBI:57737"/>
        <dbReference type="ChEBI" id="CHEBI:58121"/>
        <dbReference type="EC" id="5.1.3.1"/>
    </reaction>
</comment>
<comment type="cofactor">
    <cofactor evidence="1">
        <name>a divalent metal cation</name>
        <dbReference type="ChEBI" id="CHEBI:60240"/>
    </cofactor>
    <text evidence="1">Binds 1 divalent metal cation per subunit.</text>
</comment>
<comment type="pathway">
    <text evidence="1">Carbohydrate degradation.</text>
</comment>
<comment type="similarity">
    <text evidence="1">Belongs to the ribulose-phosphate 3-epimerase family.</text>
</comment>
<proteinExistence type="inferred from homology"/>
<feature type="chain" id="PRO_0000171584" description="Ribulose-phosphate 3-epimerase">
    <location>
        <begin position="1"/>
        <end position="234"/>
    </location>
</feature>
<feature type="active site" description="Proton acceptor" evidence="1">
    <location>
        <position position="34"/>
    </location>
</feature>
<feature type="active site" description="Proton donor" evidence="1">
    <location>
        <position position="172"/>
    </location>
</feature>
<feature type="binding site" evidence="1">
    <location>
        <position position="7"/>
    </location>
    <ligand>
        <name>substrate</name>
    </ligand>
</feature>
<feature type="binding site" evidence="1">
    <location>
        <position position="32"/>
    </location>
    <ligand>
        <name>a divalent metal cation</name>
        <dbReference type="ChEBI" id="CHEBI:60240"/>
    </ligand>
</feature>
<feature type="binding site" evidence="1">
    <location>
        <position position="34"/>
    </location>
    <ligand>
        <name>a divalent metal cation</name>
        <dbReference type="ChEBI" id="CHEBI:60240"/>
    </ligand>
</feature>
<feature type="binding site" evidence="1">
    <location>
        <position position="65"/>
    </location>
    <ligand>
        <name>a divalent metal cation</name>
        <dbReference type="ChEBI" id="CHEBI:60240"/>
    </ligand>
</feature>
<feature type="binding site" evidence="1">
    <location>
        <position position="65"/>
    </location>
    <ligand>
        <name>substrate</name>
    </ligand>
</feature>
<feature type="binding site" evidence="1">
    <location>
        <begin position="139"/>
        <end position="142"/>
    </location>
    <ligand>
        <name>substrate</name>
    </ligand>
</feature>
<feature type="binding site" evidence="1">
    <location>
        <begin position="172"/>
        <end position="174"/>
    </location>
    <ligand>
        <name>substrate</name>
    </ligand>
</feature>
<feature type="binding site" evidence="1">
    <location>
        <position position="172"/>
    </location>
    <ligand>
        <name>a divalent metal cation</name>
        <dbReference type="ChEBI" id="CHEBI:60240"/>
    </ligand>
</feature>
<feature type="binding site" evidence="1">
    <location>
        <begin position="194"/>
        <end position="195"/>
    </location>
    <ligand>
        <name>substrate</name>
    </ligand>
</feature>